<keyword id="KW-1185">Reference proteome</keyword>
<keyword id="KW-0687">Ribonucleoprotein</keyword>
<keyword id="KW-0689">Ribosomal protein</keyword>
<keyword id="KW-0694">RNA-binding</keyword>
<keyword id="KW-0699">rRNA-binding</keyword>
<proteinExistence type="inferred from homology"/>
<dbReference type="EMBL" id="CP000613">
    <property type="protein sequence ID" value="ACJ00285.1"/>
    <property type="molecule type" value="Genomic_DNA"/>
</dbReference>
<dbReference type="RefSeq" id="WP_012568065.1">
    <property type="nucleotide sequence ID" value="NC_011420.2"/>
</dbReference>
<dbReference type="SMR" id="B6IVG1"/>
<dbReference type="STRING" id="414684.RC1_2917"/>
<dbReference type="KEGG" id="rce:RC1_2917"/>
<dbReference type="eggNOG" id="COG0184">
    <property type="taxonomic scope" value="Bacteria"/>
</dbReference>
<dbReference type="HOGENOM" id="CLU_148518_0_0_5"/>
<dbReference type="OrthoDB" id="9799262at2"/>
<dbReference type="Proteomes" id="UP000001591">
    <property type="component" value="Chromosome"/>
</dbReference>
<dbReference type="GO" id="GO:0022627">
    <property type="term" value="C:cytosolic small ribosomal subunit"/>
    <property type="evidence" value="ECO:0007669"/>
    <property type="project" value="TreeGrafter"/>
</dbReference>
<dbReference type="GO" id="GO:0019843">
    <property type="term" value="F:rRNA binding"/>
    <property type="evidence" value="ECO:0007669"/>
    <property type="project" value="UniProtKB-UniRule"/>
</dbReference>
<dbReference type="GO" id="GO:0003735">
    <property type="term" value="F:structural constituent of ribosome"/>
    <property type="evidence" value="ECO:0007669"/>
    <property type="project" value="InterPro"/>
</dbReference>
<dbReference type="GO" id="GO:0006412">
    <property type="term" value="P:translation"/>
    <property type="evidence" value="ECO:0007669"/>
    <property type="project" value="UniProtKB-UniRule"/>
</dbReference>
<dbReference type="CDD" id="cd00353">
    <property type="entry name" value="Ribosomal_S15p_S13e"/>
    <property type="match status" value="1"/>
</dbReference>
<dbReference type="FunFam" id="1.10.287.10:FF:000002">
    <property type="entry name" value="30S ribosomal protein S15"/>
    <property type="match status" value="1"/>
</dbReference>
<dbReference type="Gene3D" id="6.10.250.3130">
    <property type="match status" value="1"/>
</dbReference>
<dbReference type="Gene3D" id="1.10.287.10">
    <property type="entry name" value="S15/NS1, RNA-binding"/>
    <property type="match status" value="1"/>
</dbReference>
<dbReference type="HAMAP" id="MF_01343_B">
    <property type="entry name" value="Ribosomal_uS15_B"/>
    <property type="match status" value="1"/>
</dbReference>
<dbReference type="InterPro" id="IPR000589">
    <property type="entry name" value="Ribosomal_uS15"/>
</dbReference>
<dbReference type="InterPro" id="IPR005290">
    <property type="entry name" value="Ribosomal_uS15_bac-type"/>
</dbReference>
<dbReference type="InterPro" id="IPR009068">
    <property type="entry name" value="uS15_NS1_RNA-bd_sf"/>
</dbReference>
<dbReference type="NCBIfam" id="TIGR00952">
    <property type="entry name" value="S15_bact"/>
    <property type="match status" value="1"/>
</dbReference>
<dbReference type="PANTHER" id="PTHR23321">
    <property type="entry name" value="RIBOSOMAL PROTEIN S15, BACTERIAL AND ORGANELLAR"/>
    <property type="match status" value="1"/>
</dbReference>
<dbReference type="PANTHER" id="PTHR23321:SF26">
    <property type="entry name" value="SMALL RIBOSOMAL SUBUNIT PROTEIN US15M"/>
    <property type="match status" value="1"/>
</dbReference>
<dbReference type="Pfam" id="PF00312">
    <property type="entry name" value="Ribosomal_S15"/>
    <property type="match status" value="1"/>
</dbReference>
<dbReference type="SMART" id="SM01387">
    <property type="entry name" value="Ribosomal_S15"/>
    <property type="match status" value="1"/>
</dbReference>
<dbReference type="SUPFAM" id="SSF47060">
    <property type="entry name" value="S15/NS1 RNA-binding domain"/>
    <property type="match status" value="1"/>
</dbReference>
<dbReference type="PROSITE" id="PS00362">
    <property type="entry name" value="RIBOSOMAL_S15"/>
    <property type="match status" value="1"/>
</dbReference>
<gene>
    <name evidence="1" type="primary">rpsO</name>
    <name type="ordered locus">RC1_2917</name>
</gene>
<reference key="1">
    <citation type="submission" date="2007-03" db="EMBL/GenBank/DDBJ databases">
        <title>Genome sequence of Rhodospirillum centenum.</title>
        <authorList>
            <person name="Touchman J.W."/>
            <person name="Bauer C."/>
            <person name="Blankenship R.E."/>
        </authorList>
    </citation>
    <scope>NUCLEOTIDE SEQUENCE [LARGE SCALE GENOMIC DNA]</scope>
    <source>
        <strain>ATCC 51521 / SW</strain>
    </source>
</reference>
<sequence>MSITPERKQALIEEYKTKDGDTGSPEVQVAILTERIVNLTEHLKTHAKDFHSRRGLLVMVGQRRGLLDYLKRKNQGRYDTLIQRLGLRR</sequence>
<name>RS15_RHOCS</name>
<accession>B6IVG1</accession>
<comment type="function">
    <text evidence="1">One of the primary rRNA binding proteins, it binds directly to 16S rRNA where it helps nucleate assembly of the platform of the 30S subunit by binding and bridging several RNA helices of the 16S rRNA.</text>
</comment>
<comment type="function">
    <text evidence="1">Forms an intersubunit bridge (bridge B4) with the 23S rRNA of the 50S subunit in the ribosome.</text>
</comment>
<comment type="subunit">
    <text evidence="1">Part of the 30S ribosomal subunit. Forms a bridge to the 50S subunit in the 70S ribosome, contacting the 23S rRNA.</text>
</comment>
<comment type="similarity">
    <text evidence="1">Belongs to the universal ribosomal protein uS15 family.</text>
</comment>
<evidence type="ECO:0000255" key="1">
    <source>
        <dbReference type="HAMAP-Rule" id="MF_01343"/>
    </source>
</evidence>
<evidence type="ECO:0000305" key="2"/>
<feature type="chain" id="PRO_1000143160" description="Small ribosomal subunit protein uS15">
    <location>
        <begin position="1"/>
        <end position="89"/>
    </location>
</feature>
<protein>
    <recommendedName>
        <fullName evidence="1">Small ribosomal subunit protein uS15</fullName>
    </recommendedName>
    <alternativeName>
        <fullName evidence="2">30S ribosomal protein S15</fullName>
    </alternativeName>
</protein>
<organism>
    <name type="scientific">Rhodospirillum centenum (strain ATCC 51521 / SW)</name>
    <dbReference type="NCBI Taxonomy" id="414684"/>
    <lineage>
        <taxon>Bacteria</taxon>
        <taxon>Pseudomonadati</taxon>
        <taxon>Pseudomonadota</taxon>
        <taxon>Alphaproteobacteria</taxon>
        <taxon>Rhodospirillales</taxon>
        <taxon>Rhodospirillaceae</taxon>
        <taxon>Rhodospirillum</taxon>
    </lineage>
</organism>